<name>MRAZ_BIFLO</name>
<proteinExistence type="inferred from homology"/>
<organism>
    <name type="scientific">Bifidobacterium longum (strain NCC 2705)</name>
    <dbReference type="NCBI Taxonomy" id="206672"/>
    <lineage>
        <taxon>Bacteria</taxon>
        <taxon>Bacillati</taxon>
        <taxon>Actinomycetota</taxon>
        <taxon>Actinomycetes</taxon>
        <taxon>Bifidobacteriales</taxon>
        <taxon>Bifidobacteriaceae</taxon>
        <taxon>Bifidobacterium</taxon>
    </lineage>
</organism>
<feature type="chain" id="PRO_0000108461" description="Transcriptional regulator MraZ">
    <location>
        <begin position="1"/>
        <end position="150"/>
    </location>
</feature>
<feature type="domain" description="SpoVT-AbrB 1" evidence="2">
    <location>
        <begin position="11"/>
        <end position="53"/>
    </location>
</feature>
<feature type="domain" description="SpoVT-AbrB 2" evidence="2">
    <location>
        <begin position="82"/>
        <end position="125"/>
    </location>
</feature>
<gene>
    <name evidence="1" type="primary">mraZ</name>
    <name type="ordered locus">BL1315</name>
</gene>
<dbReference type="EMBL" id="AE014295">
    <property type="protein sequence ID" value="AAN25115.1"/>
    <property type="status" value="ALT_INIT"/>
    <property type="molecule type" value="Genomic_DNA"/>
</dbReference>
<dbReference type="RefSeq" id="NP_696479.1">
    <property type="nucleotide sequence ID" value="NC_004307.2"/>
</dbReference>
<dbReference type="SMR" id="Q8G4R1"/>
<dbReference type="STRING" id="206672.BL1315"/>
<dbReference type="EnsemblBacteria" id="AAN25115">
    <property type="protein sequence ID" value="AAN25115"/>
    <property type="gene ID" value="BL1315"/>
</dbReference>
<dbReference type="KEGG" id="blo:BL1315"/>
<dbReference type="PATRIC" id="fig|206672.9.peg.165"/>
<dbReference type="HOGENOM" id="CLU_107907_0_0_11"/>
<dbReference type="OrthoDB" id="9807753at2"/>
<dbReference type="Proteomes" id="UP000000439">
    <property type="component" value="Chromosome"/>
</dbReference>
<dbReference type="GO" id="GO:0005737">
    <property type="term" value="C:cytoplasm"/>
    <property type="evidence" value="ECO:0007669"/>
    <property type="project" value="UniProtKB-UniRule"/>
</dbReference>
<dbReference type="GO" id="GO:0009295">
    <property type="term" value="C:nucleoid"/>
    <property type="evidence" value="ECO:0007669"/>
    <property type="project" value="UniProtKB-SubCell"/>
</dbReference>
<dbReference type="GO" id="GO:0003700">
    <property type="term" value="F:DNA-binding transcription factor activity"/>
    <property type="evidence" value="ECO:0007669"/>
    <property type="project" value="UniProtKB-UniRule"/>
</dbReference>
<dbReference type="GO" id="GO:0000976">
    <property type="term" value="F:transcription cis-regulatory region binding"/>
    <property type="evidence" value="ECO:0007669"/>
    <property type="project" value="TreeGrafter"/>
</dbReference>
<dbReference type="GO" id="GO:2000143">
    <property type="term" value="P:negative regulation of DNA-templated transcription initiation"/>
    <property type="evidence" value="ECO:0007669"/>
    <property type="project" value="TreeGrafter"/>
</dbReference>
<dbReference type="CDD" id="cd16321">
    <property type="entry name" value="MraZ_C"/>
    <property type="match status" value="1"/>
</dbReference>
<dbReference type="CDD" id="cd16320">
    <property type="entry name" value="MraZ_N"/>
    <property type="match status" value="1"/>
</dbReference>
<dbReference type="Gene3D" id="3.40.1550.20">
    <property type="entry name" value="Transcriptional regulator MraZ domain"/>
    <property type="match status" value="1"/>
</dbReference>
<dbReference type="HAMAP" id="MF_01008">
    <property type="entry name" value="MraZ"/>
    <property type="match status" value="1"/>
</dbReference>
<dbReference type="InterPro" id="IPR003444">
    <property type="entry name" value="MraZ"/>
</dbReference>
<dbReference type="InterPro" id="IPR035644">
    <property type="entry name" value="MraZ_C"/>
</dbReference>
<dbReference type="InterPro" id="IPR020603">
    <property type="entry name" value="MraZ_dom"/>
</dbReference>
<dbReference type="InterPro" id="IPR035642">
    <property type="entry name" value="MraZ_N"/>
</dbReference>
<dbReference type="InterPro" id="IPR038619">
    <property type="entry name" value="MraZ_sf"/>
</dbReference>
<dbReference type="InterPro" id="IPR007159">
    <property type="entry name" value="SpoVT-AbrB_dom"/>
</dbReference>
<dbReference type="InterPro" id="IPR037914">
    <property type="entry name" value="SpoVT-AbrB_sf"/>
</dbReference>
<dbReference type="NCBIfam" id="TIGR00242">
    <property type="entry name" value="division/cell wall cluster transcriptional repressor MraZ"/>
    <property type="match status" value="1"/>
</dbReference>
<dbReference type="PANTHER" id="PTHR34701">
    <property type="entry name" value="TRANSCRIPTIONAL REGULATOR MRAZ"/>
    <property type="match status" value="1"/>
</dbReference>
<dbReference type="PANTHER" id="PTHR34701:SF1">
    <property type="entry name" value="TRANSCRIPTIONAL REGULATOR MRAZ"/>
    <property type="match status" value="1"/>
</dbReference>
<dbReference type="Pfam" id="PF02381">
    <property type="entry name" value="MraZ"/>
    <property type="match status" value="2"/>
</dbReference>
<dbReference type="SUPFAM" id="SSF89447">
    <property type="entry name" value="AbrB/MazE/MraZ-like"/>
    <property type="match status" value="1"/>
</dbReference>
<dbReference type="PROSITE" id="PS51740">
    <property type="entry name" value="SPOVT_ABRB"/>
    <property type="match status" value="2"/>
</dbReference>
<comment type="subunit">
    <text evidence="1">Forms oligomers.</text>
</comment>
<comment type="subcellular location">
    <subcellularLocation>
        <location evidence="1">Cytoplasm</location>
        <location evidence="1">Nucleoid</location>
    </subcellularLocation>
</comment>
<comment type="similarity">
    <text evidence="1">Belongs to the MraZ family.</text>
</comment>
<comment type="sequence caution" evidence="3">
    <conflict type="erroneous initiation">
        <sequence resource="EMBL-CDS" id="AAN25115"/>
    </conflict>
</comment>
<sequence>MAGLPPLLLGTYTPKIDAKGRMALPAKFRSQLGQGLVMARGQERCVYLLPFDEFRRIASQIQRVSVGNKAAREYLRVFLSGAVDQQPDKQGRVLVPQMLRDYANLGSDVVVIGVGTRAELWNKDTWESYLAEKEEGYSDIADDVLPEVEF</sequence>
<evidence type="ECO:0000255" key="1">
    <source>
        <dbReference type="HAMAP-Rule" id="MF_01008"/>
    </source>
</evidence>
<evidence type="ECO:0000255" key="2">
    <source>
        <dbReference type="PROSITE-ProRule" id="PRU01076"/>
    </source>
</evidence>
<evidence type="ECO:0000305" key="3"/>
<reference key="1">
    <citation type="journal article" date="2002" name="Proc. Natl. Acad. Sci. U.S.A.">
        <title>The genome sequence of Bifidobacterium longum reflects its adaptation to the human gastrointestinal tract.</title>
        <authorList>
            <person name="Schell M.A."/>
            <person name="Karmirantzou M."/>
            <person name="Snel B."/>
            <person name="Vilanova D."/>
            <person name="Berger B."/>
            <person name="Pessi G."/>
            <person name="Zwahlen M.-C."/>
            <person name="Desiere F."/>
            <person name="Bork P."/>
            <person name="Delley M."/>
            <person name="Pridmore R.D."/>
            <person name="Arigoni F."/>
        </authorList>
    </citation>
    <scope>NUCLEOTIDE SEQUENCE [LARGE SCALE GENOMIC DNA]</scope>
    <source>
        <strain>NCC 2705</strain>
    </source>
</reference>
<keyword id="KW-0963">Cytoplasm</keyword>
<keyword id="KW-0238">DNA-binding</keyword>
<keyword id="KW-1185">Reference proteome</keyword>
<keyword id="KW-0677">Repeat</keyword>
<keyword id="KW-0804">Transcription</keyword>
<keyword id="KW-0805">Transcription regulation</keyword>
<protein>
    <recommendedName>
        <fullName>Transcriptional regulator MraZ</fullName>
    </recommendedName>
</protein>
<accession>Q8G4R1</accession>